<gene>
    <name evidence="1" type="primary">mde1</name>
    <name type="ORF">An01g08410</name>
</gene>
<sequence length="242" mass="27506">MAQEIQKENNDHLVQSSDPEHPANLIPDLCRRFYNWGWVTGTGGGTSIRRDNHIFIAPSGVQKEMMKSDNIFVLEFPTPKYPPSDRKYIRKPLDLKPSACTPLFLAAFERGAGCCIHTHSQWAVLVTLLVEREKGPNAYFEISNIEQIKGIPRGKGKGMMGFYDTLRIPIIDNTAFEEDLTGSLEKAMEEYPDTYAVLVRRHGIYVWGDDVVKAKTQCESLDYLFQLAVEMHKLGLPWVKET</sequence>
<accession>A2Q9M4</accession>
<feature type="chain" id="PRO_0000393809" description="Methylthioribulose-1-phosphate dehydratase">
    <location>
        <begin position="1"/>
        <end position="242"/>
    </location>
</feature>
<feature type="region of interest" description="Disordered" evidence="2">
    <location>
        <begin position="1"/>
        <end position="20"/>
    </location>
</feature>
<feature type="compositionally biased region" description="Basic and acidic residues" evidence="2">
    <location>
        <begin position="1"/>
        <end position="11"/>
    </location>
</feature>
<feature type="active site" description="Proton donor/acceptor" evidence="1">
    <location>
        <position position="146"/>
    </location>
</feature>
<feature type="binding site" evidence="1">
    <location>
        <position position="100"/>
    </location>
    <ligand>
        <name>substrate</name>
    </ligand>
</feature>
<feature type="binding site" evidence="1">
    <location>
        <position position="117"/>
    </location>
    <ligand>
        <name>Zn(2+)</name>
        <dbReference type="ChEBI" id="CHEBI:29105"/>
    </ligand>
</feature>
<feature type="binding site" evidence="1">
    <location>
        <position position="119"/>
    </location>
    <ligand>
        <name>Zn(2+)</name>
        <dbReference type="ChEBI" id="CHEBI:29105"/>
    </ligand>
</feature>
<feature type="binding site" evidence="1">
    <location>
        <position position="202"/>
    </location>
    <ligand>
        <name>Zn(2+)</name>
        <dbReference type="ChEBI" id="CHEBI:29105"/>
    </ligand>
</feature>
<comment type="function">
    <text evidence="1">Catalyzes the dehydration of methylthioribulose-1-phosphate (MTRu-1-P) into 2,3-diketo-5-methylthiopentyl-1-phosphate (DK-MTP-1-P).</text>
</comment>
<comment type="catalytic activity">
    <reaction evidence="1">
        <text>5-(methylsulfanyl)-D-ribulose 1-phosphate = 5-methylsulfanyl-2,3-dioxopentyl phosphate + H2O</text>
        <dbReference type="Rhea" id="RHEA:15549"/>
        <dbReference type="ChEBI" id="CHEBI:15377"/>
        <dbReference type="ChEBI" id="CHEBI:58548"/>
        <dbReference type="ChEBI" id="CHEBI:58828"/>
        <dbReference type="EC" id="4.2.1.109"/>
    </reaction>
</comment>
<comment type="cofactor">
    <cofactor evidence="1">
        <name>Zn(2+)</name>
        <dbReference type="ChEBI" id="CHEBI:29105"/>
    </cofactor>
    <text evidence="1">Binds 1 zinc ion per subunit.</text>
</comment>
<comment type="pathway">
    <text evidence="1">Amino-acid biosynthesis; L-methionine biosynthesis via salvage pathway; L-methionine from S-methyl-5-thio-alpha-D-ribose 1-phosphate: step 2/6.</text>
</comment>
<comment type="subcellular location">
    <subcellularLocation>
        <location evidence="1">Cytoplasm</location>
    </subcellularLocation>
</comment>
<comment type="similarity">
    <text evidence="1">Belongs to the aldolase class II family. MtnB subfamily.</text>
</comment>
<name>MTNB_ASPNC</name>
<keyword id="KW-0028">Amino-acid biosynthesis</keyword>
<keyword id="KW-0963">Cytoplasm</keyword>
<keyword id="KW-0456">Lyase</keyword>
<keyword id="KW-0479">Metal-binding</keyword>
<keyword id="KW-0486">Methionine biosynthesis</keyword>
<keyword id="KW-1185">Reference proteome</keyword>
<keyword id="KW-0862">Zinc</keyword>
<organism>
    <name type="scientific">Aspergillus niger (strain ATCC MYA-4892 / CBS 513.88 / FGSC A1513)</name>
    <dbReference type="NCBI Taxonomy" id="425011"/>
    <lineage>
        <taxon>Eukaryota</taxon>
        <taxon>Fungi</taxon>
        <taxon>Dikarya</taxon>
        <taxon>Ascomycota</taxon>
        <taxon>Pezizomycotina</taxon>
        <taxon>Eurotiomycetes</taxon>
        <taxon>Eurotiomycetidae</taxon>
        <taxon>Eurotiales</taxon>
        <taxon>Aspergillaceae</taxon>
        <taxon>Aspergillus</taxon>
        <taxon>Aspergillus subgen. Circumdati</taxon>
    </lineage>
</organism>
<protein>
    <recommendedName>
        <fullName evidence="1">Methylthioribulose-1-phosphate dehydratase</fullName>
        <shortName evidence="1">MTRu-1-P dehydratase</shortName>
        <ecNumber evidence="1">4.2.1.109</ecNumber>
    </recommendedName>
</protein>
<reference key="1">
    <citation type="journal article" date="2007" name="Nat. Biotechnol.">
        <title>Genome sequencing and analysis of the versatile cell factory Aspergillus niger CBS 513.88.</title>
        <authorList>
            <person name="Pel H.J."/>
            <person name="de Winde J.H."/>
            <person name="Archer D.B."/>
            <person name="Dyer P.S."/>
            <person name="Hofmann G."/>
            <person name="Schaap P.J."/>
            <person name="Turner G."/>
            <person name="de Vries R.P."/>
            <person name="Albang R."/>
            <person name="Albermann K."/>
            <person name="Andersen M.R."/>
            <person name="Bendtsen J.D."/>
            <person name="Benen J.A.E."/>
            <person name="van den Berg M."/>
            <person name="Breestraat S."/>
            <person name="Caddick M.X."/>
            <person name="Contreras R."/>
            <person name="Cornell M."/>
            <person name="Coutinho P.M."/>
            <person name="Danchin E.G.J."/>
            <person name="Debets A.J.M."/>
            <person name="Dekker P."/>
            <person name="van Dijck P.W.M."/>
            <person name="van Dijk A."/>
            <person name="Dijkhuizen L."/>
            <person name="Driessen A.J.M."/>
            <person name="d'Enfert C."/>
            <person name="Geysens S."/>
            <person name="Goosen C."/>
            <person name="Groot G.S.P."/>
            <person name="de Groot P.W.J."/>
            <person name="Guillemette T."/>
            <person name="Henrissat B."/>
            <person name="Herweijer M."/>
            <person name="van den Hombergh J.P.T.W."/>
            <person name="van den Hondel C.A.M.J.J."/>
            <person name="van der Heijden R.T.J.M."/>
            <person name="van der Kaaij R.M."/>
            <person name="Klis F.M."/>
            <person name="Kools H.J."/>
            <person name="Kubicek C.P."/>
            <person name="van Kuyk P.A."/>
            <person name="Lauber J."/>
            <person name="Lu X."/>
            <person name="van der Maarel M.J.E.C."/>
            <person name="Meulenberg R."/>
            <person name="Menke H."/>
            <person name="Mortimer M.A."/>
            <person name="Nielsen J."/>
            <person name="Oliver S.G."/>
            <person name="Olsthoorn M."/>
            <person name="Pal K."/>
            <person name="van Peij N.N.M.E."/>
            <person name="Ram A.F.J."/>
            <person name="Rinas U."/>
            <person name="Roubos J.A."/>
            <person name="Sagt C.M.J."/>
            <person name="Schmoll M."/>
            <person name="Sun J."/>
            <person name="Ussery D."/>
            <person name="Varga J."/>
            <person name="Vervecken W."/>
            <person name="van de Vondervoort P.J.J."/>
            <person name="Wedler H."/>
            <person name="Woesten H.A.B."/>
            <person name="Zeng A.-P."/>
            <person name="van Ooyen A.J.J."/>
            <person name="Visser J."/>
            <person name="Stam H."/>
        </authorList>
    </citation>
    <scope>NUCLEOTIDE SEQUENCE [LARGE SCALE GENOMIC DNA]</scope>
    <source>
        <strain>ATCC MYA-4892 / CBS 513.88 / FGSC A1513</strain>
    </source>
</reference>
<proteinExistence type="inferred from homology"/>
<dbReference type="EC" id="4.2.1.109" evidence="1"/>
<dbReference type="EMBL" id="AM269976">
    <property type="protein sequence ID" value="CAK43930.1"/>
    <property type="molecule type" value="Genomic_DNA"/>
</dbReference>
<dbReference type="RefSeq" id="XP_001389263.1">
    <property type="nucleotide sequence ID" value="XM_001389226.2"/>
</dbReference>
<dbReference type="SMR" id="A2Q9M4"/>
<dbReference type="EnsemblFungi" id="CAK43930">
    <property type="protein sequence ID" value="CAK43930"/>
    <property type="gene ID" value="An01g08410"/>
</dbReference>
<dbReference type="GeneID" id="4977357"/>
<dbReference type="KEGG" id="ang:An01g08410"/>
<dbReference type="VEuPathDB" id="FungiDB:An01g08410"/>
<dbReference type="HOGENOM" id="CLU_006033_4_0_1"/>
<dbReference type="UniPathway" id="UPA00904">
    <property type="reaction ID" value="UER00875"/>
</dbReference>
<dbReference type="Proteomes" id="UP000006706">
    <property type="component" value="Chromosome 2R"/>
</dbReference>
<dbReference type="GO" id="GO:0005737">
    <property type="term" value="C:cytoplasm"/>
    <property type="evidence" value="ECO:0007669"/>
    <property type="project" value="UniProtKB-SubCell"/>
</dbReference>
<dbReference type="GO" id="GO:0046570">
    <property type="term" value="F:methylthioribulose 1-phosphate dehydratase activity"/>
    <property type="evidence" value="ECO:0007669"/>
    <property type="project" value="UniProtKB-UniRule"/>
</dbReference>
<dbReference type="GO" id="GO:0008270">
    <property type="term" value="F:zinc ion binding"/>
    <property type="evidence" value="ECO:0007669"/>
    <property type="project" value="UniProtKB-UniRule"/>
</dbReference>
<dbReference type="GO" id="GO:0019509">
    <property type="term" value="P:L-methionine salvage from methylthioadenosine"/>
    <property type="evidence" value="ECO:0007669"/>
    <property type="project" value="UniProtKB-UniRule"/>
</dbReference>
<dbReference type="FunFam" id="3.40.225.10:FF:000003">
    <property type="entry name" value="Methylthioribulose-1-phosphate dehydratase"/>
    <property type="match status" value="1"/>
</dbReference>
<dbReference type="Gene3D" id="3.40.225.10">
    <property type="entry name" value="Class II aldolase/adducin N-terminal domain"/>
    <property type="match status" value="1"/>
</dbReference>
<dbReference type="HAMAP" id="MF_03116">
    <property type="entry name" value="Salvage_MtnB_euk"/>
    <property type="match status" value="1"/>
</dbReference>
<dbReference type="InterPro" id="IPR001303">
    <property type="entry name" value="Aldolase_II/adducin_N"/>
</dbReference>
<dbReference type="InterPro" id="IPR036409">
    <property type="entry name" value="Aldolase_II/adducin_N_sf"/>
</dbReference>
<dbReference type="InterPro" id="IPR017714">
    <property type="entry name" value="MethylthioRu-1-P_deHdtase_MtnB"/>
</dbReference>
<dbReference type="InterPro" id="IPR027514">
    <property type="entry name" value="Salvage_MtnB_euk"/>
</dbReference>
<dbReference type="NCBIfam" id="TIGR03328">
    <property type="entry name" value="salvage_mtnB"/>
    <property type="match status" value="1"/>
</dbReference>
<dbReference type="PANTHER" id="PTHR10640">
    <property type="entry name" value="METHYLTHIORIBULOSE-1-PHOSPHATE DEHYDRATASE"/>
    <property type="match status" value="1"/>
</dbReference>
<dbReference type="PANTHER" id="PTHR10640:SF7">
    <property type="entry name" value="METHYLTHIORIBULOSE-1-PHOSPHATE DEHYDRATASE"/>
    <property type="match status" value="1"/>
</dbReference>
<dbReference type="Pfam" id="PF00596">
    <property type="entry name" value="Aldolase_II"/>
    <property type="match status" value="1"/>
</dbReference>
<dbReference type="SMART" id="SM01007">
    <property type="entry name" value="Aldolase_II"/>
    <property type="match status" value="1"/>
</dbReference>
<dbReference type="SUPFAM" id="SSF53639">
    <property type="entry name" value="AraD/HMP-PK domain-like"/>
    <property type="match status" value="1"/>
</dbReference>
<evidence type="ECO:0000255" key="1">
    <source>
        <dbReference type="HAMAP-Rule" id="MF_03116"/>
    </source>
</evidence>
<evidence type="ECO:0000256" key="2">
    <source>
        <dbReference type="SAM" id="MobiDB-lite"/>
    </source>
</evidence>